<gene>
    <name type="primary">mic60</name>
    <name type="ORF">Pc13g07690</name>
</gene>
<name>MIC60_PENRW</name>
<proteinExistence type="inferred from homology"/>
<reference key="1">
    <citation type="journal article" date="2008" name="Nat. Biotechnol.">
        <title>Genome sequencing and analysis of the filamentous fungus Penicillium chrysogenum.</title>
        <authorList>
            <person name="van den Berg M.A."/>
            <person name="Albang R."/>
            <person name="Albermann K."/>
            <person name="Badger J.H."/>
            <person name="Daran J.-M."/>
            <person name="Driessen A.J.M."/>
            <person name="Garcia-Estrada C."/>
            <person name="Fedorova N.D."/>
            <person name="Harris D.M."/>
            <person name="Heijne W.H.M."/>
            <person name="Joardar V.S."/>
            <person name="Kiel J.A.K.W."/>
            <person name="Kovalchuk A."/>
            <person name="Martin J.F."/>
            <person name="Nierman W.C."/>
            <person name="Nijland J.G."/>
            <person name="Pronk J.T."/>
            <person name="Roubos J.A."/>
            <person name="van der Klei I.J."/>
            <person name="van Peij N.N.M.E."/>
            <person name="Veenhuis M."/>
            <person name="von Doehren H."/>
            <person name="Wagner C."/>
            <person name="Wortman J.R."/>
            <person name="Bovenberg R.A.L."/>
        </authorList>
    </citation>
    <scope>NUCLEOTIDE SEQUENCE [LARGE SCALE GENOMIC DNA]</scope>
    <source>
        <strain>ATCC 28089 / DSM 1075 / NRRL 1951 / Wisconsin 54-1255</strain>
    </source>
</reference>
<sequence>MLRSSIAPGRQLLSNPVRQRIPSQWLSRAGASNRLAGQVKRTISPSFLFLYTHNRHAQRFFADSKPPTTGGPTPVSPSSESSVPPETISKAAEQESKLPPSPPAAAPRKSGRFRRFLIYLILTSGFAYGGSIFLALKFDNFHDFFTEYIPYGEESVLYFEERDFYRRFPNALRHPNRLPAAPREEGKPVTIPSKSGLSWKVAEEQKADADSKKAEAAHEGQIKPAAAKPEERNAAVVKAKEDTASKHSTKEAKPESEAKSPVSLDEPRKPAVSASTIELLQLQDGDDTVVQDLVKTFNDIVTVISADENSNKYSAPVAKAKGELEKIAEKIAAIRSEARNTAQEELNKLHATFDESARELMRQFEEVRSTDLASFREEFEAEREKLALAYQQKVNTELRHAQELAEQRLQNELVEQAIELNRKYVHEVKSLVEREREGRLSKLTELTADVNELEKLTAGWSDVIDANLKTQQLQVALDAVRTVVERAETPRPFIRELVAVKELAAGDAVVEAAIASINPTAYQRGIPSTTQIFERFRRVASEVRKASLLPEDAGVASHAASLVLSKVMFKKDALSEGDDVESVLVRTENLLQQGDVDAAAREMNTLQGWAKILSKDWLGDVRKVLEVRQALEVIEAEARLQCLRVE</sequence>
<keyword id="KW-0175">Coiled coil</keyword>
<keyword id="KW-0472">Membrane</keyword>
<keyword id="KW-0496">Mitochondrion</keyword>
<keyword id="KW-0999">Mitochondrion inner membrane</keyword>
<keyword id="KW-1185">Reference proteome</keyword>
<keyword id="KW-0809">Transit peptide</keyword>
<keyword id="KW-0812">Transmembrane</keyword>
<keyword id="KW-1133">Transmembrane helix</keyword>
<accession>B6H457</accession>
<comment type="function">
    <text evidence="1">Component of the MICOS complex, a large protein complex of the mitochondrial inner membrane that plays crucial roles in the maintenance of crista junctions, inner membrane architecture, and formation of contact sites to the outer membrane. Plays a role in keeping cristae membranes connected to the inner boundary membrane. Also promotes protein import via the mitochondrial intermembrane space assembly (MIA) pathway (By similarity).</text>
</comment>
<comment type="subunit">
    <text evidence="1">Component of the mitochondrial contact site and cristae organizing system (MICOS) complex.</text>
</comment>
<comment type="subcellular location">
    <subcellularLocation>
        <location evidence="1">Mitochondrion inner membrane</location>
        <topology evidence="1">Single-pass membrane protein</topology>
    </subcellularLocation>
</comment>
<comment type="similarity">
    <text evidence="4">Belongs to the MICOS complex subunit Mic60 family.</text>
</comment>
<feature type="transit peptide" description="Mitochondrion" evidence="2">
    <location>
        <begin position="1"/>
        <end position="61"/>
    </location>
</feature>
<feature type="chain" id="PRO_0000406666" description="MICOS complex subunit mic60">
    <location>
        <begin position="62"/>
        <end position="646"/>
    </location>
</feature>
<feature type="topological domain" description="Mitochondrial matrix" evidence="2">
    <location>
        <begin position="62"/>
        <end position="115"/>
    </location>
</feature>
<feature type="transmembrane region" description="Helical" evidence="2">
    <location>
        <begin position="116"/>
        <end position="136"/>
    </location>
</feature>
<feature type="topological domain" description="Mitochondrial intermembrane" evidence="2">
    <location>
        <begin position="137"/>
        <end position="646"/>
    </location>
</feature>
<feature type="region of interest" description="Disordered" evidence="3">
    <location>
        <begin position="61"/>
        <end position="108"/>
    </location>
</feature>
<feature type="region of interest" description="Disordered" evidence="3">
    <location>
        <begin position="173"/>
        <end position="269"/>
    </location>
</feature>
<feature type="coiled-coil region" evidence="2">
    <location>
        <begin position="317"/>
        <end position="455"/>
    </location>
</feature>
<feature type="compositionally biased region" description="Low complexity" evidence="3">
    <location>
        <begin position="66"/>
        <end position="87"/>
    </location>
</feature>
<feature type="compositionally biased region" description="Basic and acidic residues" evidence="3">
    <location>
        <begin position="201"/>
        <end position="221"/>
    </location>
</feature>
<feature type="compositionally biased region" description="Basic and acidic residues" evidence="3">
    <location>
        <begin position="228"/>
        <end position="258"/>
    </location>
</feature>
<organism>
    <name type="scientific">Penicillium rubens (strain ATCC 28089 / DSM 1075 / NRRL 1951 / Wisconsin 54-1255)</name>
    <name type="common">Penicillium chrysogenum</name>
    <dbReference type="NCBI Taxonomy" id="500485"/>
    <lineage>
        <taxon>Eukaryota</taxon>
        <taxon>Fungi</taxon>
        <taxon>Dikarya</taxon>
        <taxon>Ascomycota</taxon>
        <taxon>Pezizomycotina</taxon>
        <taxon>Eurotiomycetes</taxon>
        <taxon>Eurotiomycetidae</taxon>
        <taxon>Eurotiales</taxon>
        <taxon>Aspergillaceae</taxon>
        <taxon>Penicillium</taxon>
        <taxon>Penicillium chrysogenum species complex</taxon>
    </lineage>
</organism>
<dbReference type="EMBL" id="AM920428">
    <property type="protein sequence ID" value="CAP91838.1"/>
    <property type="molecule type" value="Genomic_DNA"/>
</dbReference>
<dbReference type="RefSeq" id="XP_002559198.1">
    <property type="nucleotide sequence ID" value="XM_002559152.1"/>
</dbReference>
<dbReference type="SMR" id="B6H457"/>
<dbReference type="STRING" id="500485.B6H457"/>
<dbReference type="VEuPathDB" id="FungiDB:PCH_Pc13g07690"/>
<dbReference type="eggNOG" id="KOG1854">
    <property type="taxonomic scope" value="Eukaryota"/>
</dbReference>
<dbReference type="HOGENOM" id="CLU_008024_1_2_1"/>
<dbReference type="OMA" id="RLDHQMQ"/>
<dbReference type="OrthoDB" id="10261039at2759"/>
<dbReference type="BioCyc" id="PCHR:PC13G07690-MONOMER"/>
<dbReference type="Proteomes" id="UP000000724">
    <property type="component" value="Contig Pc00c13"/>
</dbReference>
<dbReference type="GO" id="GO:0061617">
    <property type="term" value="C:MICOS complex"/>
    <property type="evidence" value="ECO:0007669"/>
    <property type="project" value="TreeGrafter"/>
</dbReference>
<dbReference type="GO" id="GO:0042407">
    <property type="term" value="P:cristae formation"/>
    <property type="evidence" value="ECO:0007669"/>
    <property type="project" value="TreeGrafter"/>
</dbReference>
<dbReference type="InterPro" id="IPR019133">
    <property type="entry name" value="MIC60"/>
</dbReference>
<dbReference type="PANTHER" id="PTHR15415:SF7">
    <property type="entry name" value="MICOS COMPLEX SUBUNIT MIC60"/>
    <property type="match status" value="1"/>
</dbReference>
<dbReference type="PANTHER" id="PTHR15415">
    <property type="entry name" value="MITOFILIN"/>
    <property type="match status" value="1"/>
</dbReference>
<dbReference type="Pfam" id="PF09731">
    <property type="entry name" value="Mitofilin"/>
    <property type="match status" value="2"/>
</dbReference>
<evidence type="ECO:0000250" key="1"/>
<evidence type="ECO:0000255" key="2"/>
<evidence type="ECO:0000256" key="3">
    <source>
        <dbReference type="SAM" id="MobiDB-lite"/>
    </source>
</evidence>
<evidence type="ECO:0000305" key="4"/>
<protein>
    <recommendedName>
        <fullName>MICOS complex subunit mic60</fullName>
    </recommendedName>
    <alternativeName>
        <fullName>Mitofilin</fullName>
    </alternativeName>
</protein>